<name>FABG_VIBCH</name>
<dbReference type="EC" id="1.1.1.100"/>
<dbReference type="EMBL" id="AE003852">
    <property type="protein sequence ID" value="AAF95169.1"/>
    <property type="status" value="ALT_INIT"/>
    <property type="molecule type" value="Genomic_DNA"/>
</dbReference>
<dbReference type="PIR" id="F82128">
    <property type="entry name" value="F82128"/>
</dbReference>
<dbReference type="RefSeq" id="NP_231655.1">
    <property type="nucleotide sequence ID" value="NC_002505.1"/>
</dbReference>
<dbReference type="RefSeq" id="WP_001918744.1">
    <property type="nucleotide sequence ID" value="NZ_LT906614.1"/>
</dbReference>
<dbReference type="PDB" id="3RRO">
    <property type="method" value="X-ray"/>
    <property type="resolution" value="2.00 A"/>
    <property type="chains" value="A/B=1-244"/>
</dbReference>
<dbReference type="PDB" id="3RSH">
    <property type="method" value="X-ray"/>
    <property type="resolution" value="1.95 A"/>
    <property type="chains" value="A/B=1-244"/>
</dbReference>
<dbReference type="PDB" id="3U09">
    <property type="method" value="X-ray"/>
    <property type="resolution" value="1.75 A"/>
    <property type="chains" value="A/B=1-244"/>
</dbReference>
<dbReference type="PDB" id="4I08">
    <property type="method" value="X-ray"/>
    <property type="resolution" value="2.06 A"/>
    <property type="chains" value="A/B=1-244"/>
</dbReference>
<dbReference type="PDB" id="4WJZ">
    <property type="method" value="X-ray"/>
    <property type="resolution" value="2.40 A"/>
    <property type="chains" value="A/B/C/D=1-244"/>
</dbReference>
<dbReference type="PDB" id="5END">
    <property type="method" value="X-ray"/>
    <property type="resolution" value="2.55 A"/>
    <property type="chains" value="A/B=1-244"/>
</dbReference>
<dbReference type="PDBsum" id="3RRO"/>
<dbReference type="PDBsum" id="3RSH"/>
<dbReference type="PDBsum" id="3U09"/>
<dbReference type="PDBsum" id="4I08"/>
<dbReference type="PDBsum" id="4WJZ"/>
<dbReference type="PDBsum" id="5END"/>
<dbReference type="SMR" id="Q9KQH7"/>
<dbReference type="STRING" id="243277.VC_2021"/>
<dbReference type="DNASU" id="2613400"/>
<dbReference type="EnsemblBacteria" id="AAF95169">
    <property type="protein sequence ID" value="AAF95169"/>
    <property type="gene ID" value="VC_2021"/>
</dbReference>
<dbReference type="KEGG" id="vch:VC_2021"/>
<dbReference type="PATRIC" id="fig|243277.26.peg.1931"/>
<dbReference type="eggNOG" id="COG1028">
    <property type="taxonomic scope" value="Bacteria"/>
</dbReference>
<dbReference type="HOGENOM" id="CLU_010194_1_3_6"/>
<dbReference type="UniPathway" id="UPA00094"/>
<dbReference type="EvolutionaryTrace" id="Q9KQH7"/>
<dbReference type="Proteomes" id="UP000000584">
    <property type="component" value="Chromosome 1"/>
</dbReference>
<dbReference type="GO" id="GO:0004316">
    <property type="term" value="F:3-oxoacyl-[acyl-carrier-protein] reductase (NADPH) activity"/>
    <property type="evidence" value="ECO:0000250"/>
    <property type="project" value="UniProtKB"/>
</dbReference>
<dbReference type="GO" id="GO:0051287">
    <property type="term" value="F:NAD binding"/>
    <property type="evidence" value="ECO:0007669"/>
    <property type="project" value="InterPro"/>
</dbReference>
<dbReference type="GO" id="GO:0050661">
    <property type="term" value="F:NADP binding"/>
    <property type="evidence" value="ECO:0000250"/>
    <property type="project" value="UniProtKB"/>
</dbReference>
<dbReference type="GO" id="GO:0016616">
    <property type="term" value="F:oxidoreductase activity, acting on the CH-OH group of donors, NAD or NADP as acceptor"/>
    <property type="evidence" value="ECO:0000318"/>
    <property type="project" value="GO_Central"/>
</dbReference>
<dbReference type="GO" id="GO:0030497">
    <property type="term" value="P:fatty acid elongation"/>
    <property type="evidence" value="ECO:0000250"/>
    <property type="project" value="UniProtKB"/>
</dbReference>
<dbReference type="CDD" id="cd05333">
    <property type="entry name" value="BKR_SDR_c"/>
    <property type="match status" value="1"/>
</dbReference>
<dbReference type="FunFam" id="3.40.50.720:FF:000037">
    <property type="entry name" value="3-oxoacyl-[acyl-carrier-protein] reductase FabG"/>
    <property type="match status" value="1"/>
</dbReference>
<dbReference type="Gene3D" id="3.40.50.720">
    <property type="entry name" value="NAD(P)-binding Rossmann-like Domain"/>
    <property type="match status" value="1"/>
</dbReference>
<dbReference type="InterPro" id="IPR011284">
    <property type="entry name" value="3oxo_ACP_reduc"/>
</dbReference>
<dbReference type="InterPro" id="IPR036291">
    <property type="entry name" value="NAD(P)-bd_dom_sf"/>
</dbReference>
<dbReference type="InterPro" id="IPR020904">
    <property type="entry name" value="Sc_DH/Rdtase_CS"/>
</dbReference>
<dbReference type="InterPro" id="IPR050259">
    <property type="entry name" value="SDR"/>
</dbReference>
<dbReference type="InterPro" id="IPR002347">
    <property type="entry name" value="SDR_fam"/>
</dbReference>
<dbReference type="NCBIfam" id="TIGR01830">
    <property type="entry name" value="3oxo_ACP_reduc"/>
    <property type="match status" value="1"/>
</dbReference>
<dbReference type="NCBIfam" id="NF004197">
    <property type="entry name" value="PRK05653.1-1"/>
    <property type="match status" value="1"/>
</dbReference>
<dbReference type="NCBIfam" id="NF005559">
    <property type="entry name" value="PRK07231.1"/>
    <property type="match status" value="1"/>
</dbReference>
<dbReference type="NCBIfam" id="NF009464">
    <property type="entry name" value="PRK12824.1"/>
    <property type="match status" value="1"/>
</dbReference>
<dbReference type="NCBIfam" id="NF009466">
    <property type="entry name" value="PRK12826.1-2"/>
    <property type="match status" value="1"/>
</dbReference>
<dbReference type="PANTHER" id="PTHR42879">
    <property type="entry name" value="3-OXOACYL-(ACYL-CARRIER-PROTEIN) REDUCTASE"/>
    <property type="match status" value="1"/>
</dbReference>
<dbReference type="PANTHER" id="PTHR42879:SF2">
    <property type="entry name" value="3-OXOACYL-[ACYL-CARRIER-PROTEIN] REDUCTASE FABG"/>
    <property type="match status" value="1"/>
</dbReference>
<dbReference type="Pfam" id="PF13561">
    <property type="entry name" value="adh_short_C2"/>
    <property type="match status" value="1"/>
</dbReference>
<dbReference type="PRINTS" id="PR00081">
    <property type="entry name" value="GDHRDH"/>
</dbReference>
<dbReference type="PRINTS" id="PR00080">
    <property type="entry name" value="SDRFAMILY"/>
</dbReference>
<dbReference type="SMART" id="SM00822">
    <property type="entry name" value="PKS_KR"/>
    <property type="match status" value="1"/>
</dbReference>
<dbReference type="SUPFAM" id="SSF51735">
    <property type="entry name" value="NAD(P)-binding Rossmann-fold domains"/>
    <property type="match status" value="1"/>
</dbReference>
<dbReference type="PROSITE" id="PS00061">
    <property type="entry name" value="ADH_SHORT"/>
    <property type="match status" value="1"/>
</dbReference>
<organism>
    <name type="scientific">Vibrio cholerae serotype O1 (strain ATCC 39315 / El Tor Inaba N16961)</name>
    <dbReference type="NCBI Taxonomy" id="243277"/>
    <lineage>
        <taxon>Bacteria</taxon>
        <taxon>Pseudomonadati</taxon>
        <taxon>Pseudomonadota</taxon>
        <taxon>Gammaproteobacteria</taxon>
        <taxon>Vibrionales</taxon>
        <taxon>Vibrionaceae</taxon>
        <taxon>Vibrio</taxon>
    </lineage>
</organism>
<sequence>MNLEGKVALVTGASRGIGKAIAELLAERGAKVIGTATSESGAQAISDYLGDNGKGMALNVTNPESIEAVLKAITDEFGGVDILVNNAGITRDNLLMRMKEEEWSDIMETNLTSIFRLSKAVLRGMMKKRQGRIINVGSVVGTMGNAGQANYAAAKAGVIGFTKSMAREVASRGVTVNTVAPGFIETDMTKALNDEQRTATLAQVPAGRLGDPREIASAVAFLASPEAAYITGETLHVNGGMYMI</sequence>
<reference key="1">
    <citation type="journal article" date="2000" name="Nature">
        <title>DNA sequence of both chromosomes of the cholera pathogen Vibrio cholerae.</title>
        <authorList>
            <person name="Heidelberg J.F."/>
            <person name="Eisen J.A."/>
            <person name="Nelson W.C."/>
            <person name="Clayton R.A."/>
            <person name="Gwinn M.L."/>
            <person name="Dodson R.J."/>
            <person name="Haft D.H."/>
            <person name="Hickey E.K."/>
            <person name="Peterson J.D."/>
            <person name="Umayam L.A."/>
            <person name="Gill S.R."/>
            <person name="Nelson K.E."/>
            <person name="Read T.D."/>
            <person name="Tettelin H."/>
            <person name="Richardson D.L."/>
            <person name="Ermolaeva M.D."/>
            <person name="Vamathevan J.J."/>
            <person name="Bass S."/>
            <person name="Qin H."/>
            <person name="Dragoi I."/>
            <person name="Sellers P."/>
            <person name="McDonald L.A."/>
            <person name="Utterback T.R."/>
            <person name="Fleischmann R.D."/>
            <person name="Nierman W.C."/>
            <person name="White O."/>
            <person name="Salzberg S.L."/>
            <person name="Smith H.O."/>
            <person name="Colwell R.R."/>
            <person name="Mekalanos J.J."/>
            <person name="Venter J.C."/>
            <person name="Fraser C.M."/>
        </authorList>
    </citation>
    <scope>NUCLEOTIDE SEQUENCE [LARGE SCALE GENOMIC DNA]</scope>
    <source>
        <strain>ATCC 39315 / El Tor Inaba N16961</strain>
    </source>
</reference>
<comment type="function">
    <text evidence="1">Catalyzes the NADPH-dependent reduction of beta-ketoacyl-ACP substrates to beta-hydroxyacyl-ACP products, the first reductive step in the elongation cycle of fatty acid biosynthesis.</text>
</comment>
<comment type="catalytic activity">
    <reaction>
        <text>a (3R)-hydroxyacyl-[ACP] + NADP(+) = a 3-oxoacyl-[ACP] + NADPH + H(+)</text>
        <dbReference type="Rhea" id="RHEA:17397"/>
        <dbReference type="Rhea" id="RHEA-COMP:9916"/>
        <dbReference type="Rhea" id="RHEA-COMP:9945"/>
        <dbReference type="ChEBI" id="CHEBI:15378"/>
        <dbReference type="ChEBI" id="CHEBI:57783"/>
        <dbReference type="ChEBI" id="CHEBI:58349"/>
        <dbReference type="ChEBI" id="CHEBI:78776"/>
        <dbReference type="ChEBI" id="CHEBI:78827"/>
        <dbReference type="EC" id="1.1.1.100"/>
    </reaction>
</comment>
<comment type="pathway">
    <text>Lipid metabolism; fatty acid biosynthesis.</text>
</comment>
<comment type="subunit">
    <text evidence="1">Homotetramer.</text>
</comment>
<comment type="similarity">
    <text evidence="3">Belongs to the short-chain dehydrogenases/reductases (SDR) family.</text>
</comment>
<comment type="sequence caution" evidence="3">
    <conflict type="erroneous initiation">
        <sequence resource="EMBL-CDS" id="AAF95169"/>
    </conflict>
    <text>Extended N-terminus.</text>
</comment>
<proteinExistence type="evidence at protein level"/>
<protein>
    <recommendedName>
        <fullName>3-oxoacyl-[acyl-carrier-protein] reductase FabG</fullName>
        <ecNumber>1.1.1.100</ecNumber>
    </recommendedName>
    <alternativeName>
        <fullName>3-ketoacyl-acyl carrier protein reductase</fullName>
    </alternativeName>
    <alternativeName>
        <fullName>Beta-Ketoacyl-acyl carrier protein reductase</fullName>
    </alternativeName>
    <alternativeName>
        <fullName>Beta-ketoacyl-ACP reductase</fullName>
    </alternativeName>
</protein>
<keyword id="KW-0002">3D-structure</keyword>
<keyword id="KW-0275">Fatty acid biosynthesis</keyword>
<keyword id="KW-0276">Fatty acid metabolism</keyword>
<keyword id="KW-0444">Lipid biosynthesis</keyword>
<keyword id="KW-0443">Lipid metabolism</keyword>
<keyword id="KW-0521">NADP</keyword>
<keyword id="KW-0560">Oxidoreductase</keyword>
<keyword id="KW-1185">Reference proteome</keyword>
<gene>
    <name type="primary">fabG</name>
    <name type="ordered locus">VC_2021</name>
</gene>
<accession>Q9KQH7</accession>
<evidence type="ECO:0000250" key="1"/>
<evidence type="ECO:0000255" key="2">
    <source>
        <dbReference type="PROSITE-ProRule" id="PRU10001"/>
    </source>
</evidence>
<evidence type="ECO:0000305" key="3"/>
<evidence type="ECO:0007829" key="4">
    <source>
        <dbReference type="PDB" id="3U09"/>
    </source>
</evidence>
<evidence type="ECO:0007829" key="5">
    <source>
        <dbReference type="PDB" id="4I08"/>
    </source>
</evidence>
<feature type="chain" id="PRO_0000054694" description="3-oxoacyl-[acyl-carrier-protein] reductase FabG">
    <location>
        <begin position="1"/>
        <end position="244"/>
    </location>
</feature>
<feature type="active site" description="Proton acceptor" evidence="2">
    <location>
        <position position="151"/>
    </location>
</feature>
<feature type="binding site" evidence="1">
    <location>
        <begin position="12"/>
        <end position="15"/>
    </location>
    <ligand>
        <name>NADP(+)</name>
        <dbReference type="ChEBI" id="CHEBI:58349"/>
    </ligand>
</feature>
<feature type="binding site" evidence="1">
    <location>
        <position position="37"/>
    </location>
    <ligand>
        <name>NADP(+)</name>
        <dbReference type="ChEBI" id="CHEBI:58349"/>
    </ligand>
</feature>
<feature type="binding site" evidence="1">
    <location>
        <begin position="59"/>
        <end position="60"/>
    </location>
    <ligand>
        <name>NADP(+)</name>
        <dbReference type="ChEBI" id="CHEBI:58349"/>
    </ligand>
</feature>
<feature type="binding site" evidence="1">
    <location>
        <position position="86"/>
    </location>
    <ligand>
        <name>NADP(+)</name>
        <dbReference type="ChEBI" id="CHEBI:58349"/>
    </ligand>
</feature>
<feature type="binding site" evidence="1">
    <location>
        <position position="138"/>
    </location>
    <ligand>
        <name>substrate</name>
    </ligand>
</feature>
<feature type="binding site" evidence="1">
    <location>
        <begin position="151"/>
        <end position="155"/>
    </location>
    <ligand>
        <name>NADP(+)</name>
        <dbReference type="ChEBI" id="CHEBI:58349"/>
    </ligand>
</feature>
<feature type="binding site" evidence="1">
    <location>
        <position position="184"/>
    </location>
    <ligand>
        <name>NADP(+)</name>
        <dbReference type="ChEBI" id="CHEBI:58349"/>
    </ligand>
</feature>
<feature type="strand" evidence="4">
    <location>
        <begin position="7"/>
        <end position="12"/>
    </location>
</feature>
<feature type="helix" evidence="4">
    <location>
        <begin position="16"/>
        <end position="27"/>
    </location>
</feature>
<feature type="strand" evidence="4">
    <location>
        <begin position="31"/>
        <end position="38"/>
    </location>
</feature>
<feature type="helix" evidence="4">
    <location>
        <begin position="39"/>
        <end position="49"/>
    </location>
</feature>
<feature type="helix" evidence="4">
    <location>
        <begin position="50"/>
        <end position="52"/>
    </location>
</feature>
<feature type="strand" evidence="4">
    <location>
        <begin position="53"/>
        <end position="57"/>
    </location>
</feature>
<feature type="helix" evidence="4">
    <location>
        <begin position="63"/>
        <end position="77"/>
    </location>
</feature>
<feature type="strand" evidence="4">
    <location>
        <begin position="81"/>
        <end position="85"/>
    </location>
</feature>
<feature type="helix" evidence="4">
    <location>
        <begin position="95"/>
        <end position="97"/>
    </location>
</feature>
<feature type="helix" evidence="4">
    <location>
        <begin position="100"/>
        <end position="110"/>
    </location>
</feature>
<feature type="helix" evidence="4">
    <location>
        <begin position="112"/>
        <end position="128"/>
    </location>
</feature>
<feature type="strand" evidence="4">
    <location>
        <begin position="131"/>
        <end position="136"/>
    </location>
</feature>
<feature type="helix" evidence="4">
    <location>
        <begin position="140"/>
        <end position="143"/>
    </location>
</feature>
<feature type="helix" evidence="4">
    <location>
        <begin position="149"/>
        <end position="169"/>
    </location>
</feature>
<feature type="helix" evidence="4">
    <location>
        <begin position="170"/>
        <end position="172"/>
    </location>
</feature>
<feature type="strand" evidence="4">
    <location>
        <begin position="174"/>
        <end position="181"/>
    </location>
</feature>
<feature type="strand" evidence="5">
    <location>
        <begin position="183"/>
        <end position="186"/>
    </location>
</feature>
<feature type="helix" evidence="4">
    <location>
        <begin position="187"/>
        <end position="190"/>
    </location>
</feature>
<feature type="helix" evidence="4">
    <location>
        <begin position="194"/>
        <end position="201"/>
    </location>
</feature>
<feature type="helix" evidence="4">
    <location>
        <begin position="212"/>
        <end position="223"/>
    </location>
</feature>
<feature type="helix" evidence="4">
    <location>
        <begin position="225"/>
        <end position="227"/>
    </location>
</feature>
<feature type="strand" evidence="4">
    <location>
        <begin position="234"/>
        <end position="238"/>
    </location>
</feature>